<proteinExistence type="evidence at protein level"/>
<reference key="1">
    <citation type="journal article" date="1998" name="J. Biol. Chem.">
        <title>A novel, non-redox-regulated NAD-dependent malate dehydrogenase from chloroplasts of Arabidopsis thaliana L.</title>
        <authorList>
            <person name="Berkemeyer M."/>
            <person name="Scheibe R."/>
            <person name="Ocheretina O."/>
        </authorList>
    </citation>
    <scope>NUCLEOTIDE SEQUENCE [MRNA]</scope>
    <scope>SUBCELLULAR LOCATION</scope>
    <source>
        <strain>cv. Columbia</strain>
        <tissue>Leaf</tissue>
    </source>
</reference>
<reference key="2">
    <citation type="journal article" date="2000" name="Nature">
        <title>Sequence and analysis of chromosome 3 of the plant Arabidopsis thaliana.</title>
        <authorList>
            <person name="Salanoubat M."/>
            <person name="Lemcke K."/>
            <person name="Rieger M."/>
            <person name="Ansorge W."/>
            <person name="Unseld M."/>
            <person name="Fartmann B."/>
            <person name="Valle G."/>
            <person name="Bloecker H."/>
            <person name="Perez-Alonso M."/>
            <person name="Obermaier B."/>
            <person name="Delseny M."/>
            <person name="Boutry M."/>
            <person name="Grivell L.A."/>
            <person name="Mache R."/>
            <person name="Puigdomenech P."/>
            <person name="De Simone V."/>
            <person name="Choisne N."/>
            <person name="Artiguenave F."/>
            <person name="Robert C."/>
            <person name="Brottier P."/>
            <person name="Wincker P."/>
            <person name="Cattolico L."/>
            <person name="Weissenbach J."/>
            <person name="Saurin W."/>
            <person name="Quetier F."/>
            <person name="Schaefer M."/>
            <person name="Mueller-Auer S."/>
            <person name="Gabel C."/>
            <person name="Fuchs M."/>
            <person name="Benes V."/>
            <person name="Wurmbach E."/>
            <person name="Drzonek H."/>
            <person name="Erfle H."/>
            <person name="Jordan N."/>
            <person name="Bangert S."/>
            <person name="Wiedelmann R."/>
            <person name="Kranz H."/>
            <person name="Voss H."/>
            <person name="Holland R."/>
            <person name="Brandt P."/>
            <person name="Nyakatura G."/>
            <person name="Vezzi A."/>
            <person name="D'Angelo M."/>
            <person name="Pallavicini A."/>
            <person name="Toppo S."/>
            <person name="Simionati B."/>
            <person name="Conrad A."/>
            <person name="Hornischer K."/>
            <person name="Kauer G."/>
            <person name="Loehnert T.-H."/>
            <person name="Nordsiek G."/>
            <person name="Reichelt J."/>
            <person name="Scharfe M."/>
            <person name="Schoen O."/>
            <person name="Bargues M."/>
            <person name="Terol J."/>
            <person name="Climent J."/>
            <person name="Navarro P."/>
            <person name="Collado C."/>
            <person name="Perez-Perez A."/>
            <person name="Ottenwaelder B."/>
            <person name="Duchemin D."/>
            <person name="Cooke R."/>
            <person name="Laudie M."/>
            <person name="Berger-Llauro C."/>
            <person name="Purnelle B."/>
            <person name="Masuy D."/>
            <person name="de Haan M."/>
            <person name="Maarse A.C."/>
            <person name="Alcaraz J.-P."/>
            <person name="Cottet A."/>
            <person name="Casacuberta E."/>
            <person name="Monfort A."/>
            <person name="Argiriou A."/>
            <person name="Flores M."/>
            <person name="Liguori R."/>
            <person name="Vitale D."/>
            <person name="Mannhaupt G."/>
            <person name="Haase D."/>
            <person name="Schoof H."/>
            <person name="Rudd S."/>
            <person name="Zaccaria P."/>
            <person name="Mewes H.-W."/>
            <person name="Mayer K.F.X."/>
            <person name="Kaul S."/>
            <person name="Town C.D."/>
            <person name="Koo H.L."/>
            <person name="Tallon L.J."/>
            <person name="Jenkins J."/>
            <person name="Rooney T."/>
            <person name="Rizzo M."/>
            <person name="Walts A."/>
            <person name="Utterback T."/>
            <person name="Fujii C.Y."/>
            <person name="Shea T.P."/>
            <person name="Creasy T.H."/>
            <person name="Haas B."/>
            <person name="Maiti R."/>
            <person name="Wu D."/>
            <person name="Peterson J."/>
            <person name="Van Aken S."/>
            <person name="Pai G."/>
            <person name="Militscher J."/>
            <person name="Sellers P."/>
            <person name="Gill J.E."/>
            <person name="Feldblyum T.V."/>
            <person name="Preuss D."/>
            <person name="Lin X."/>
            <person name="Nierman W.C."/>
            <person name="Salzberg S.L."/>
            <person name="White O."/>
            <person name="Venter J.C."/>
            <person name="Fraser C.M."/>
            <person name="Kaneko T."/>
            <person name="Nakamura Y."/>
            <person name="Sato S."/>
            <person name="Kato T."/>
            <person name="Asamizu E."/>
            <person name="Sasamoto S."/>
            <person name="Kimura T."/>
            <person name="Idesawa K."/>
            <person name="Kawashima K."/>
            <person name="Kishida Y."/>
            <person name="Kiyokawa C."/>
            <person name="Kohara M."/>
            <person name="Matsumoto M."/>
            <person name="Matsuno A."/>
            <person name="Muraki A."/>
            <person name="Nakayama S."/>
            <person name="Nakazaki N."/>
            <person name="Shinpo S."/>
            <person name="Takeuchi C."/>
            <person name="Wada T."/>
            <person name="Watanabe A."/>
            <person name="Yamada M."/>
            <person name="Yasuda M."/>
            <person name="Tabata S."/>
        </authorList>
    </citation>
    <scope>NUCLEOTIDE SEQUENCE [LARGE SCALE GENOMIC DNA]</scope>
    <source>
        <strain>cv. Columbia</strain>
    </source>
</reference>
<reference key="3">
    <citation type="journal article" date="2017" name="Plant J.">
        <title>Araport11: a complete reannotation of the Arabidopsis thaliana reference genome.</title>
        <authorList>
            <person name="Cheng C.Y."/>
            <person name="Krishnakumar V."/>
            <person name="Chan A.P."/>
            <person name="Thibaud-Nissen F."/>
            <person name="Schobel S."/>
            <person name="Town C.D."/>
        </authorList>
    </citation>
    <scope>GENOME REANNOTATION</scope>
    <source>
        <strain>cv. Columbia</strain>
    </source>
</reference>
<reference key="4">
    <citation type="journal article" date="2003" name="Science">
        <title>Empirical analysis of transcriptional activity in the Arabidopsis genome.</title>
        <authorList>
            <person name="Yamada K."/>
            <person name="Lim J."/>
            <person name="Dale J.M."/>
            <person name="Chen H."/>
            <person name="Shinn P."/>
            <person name="Palm C.J."/>
            <person name="Southwick A.M."/>
            <person name="Wu H.C."/>
            <person name="Kim C.J."/>
            <person name="Nguyen M."/>
            <person name="Pham P.K."/>
            <person name="Cheuk R.F."/>
            <person name="Karlin-Newmann G."/>
            <person name="Liu S.X."/>
            <person name="Lam B."/>
            <person name="Sakano H."/>
            <person name="Wu T."/>
            <person name="Yu G."/>
            <person name="Miranda M."/>
            <person name="Quach H.L."/>
            <person name="Tripp M."/>
            <person name="Chang C.H."/>
            <person name="Lee J.M."/>
            <person name="Toriumi M.J."/>
            <person name="Chan M.M."/>
            <person name="Tang C.C."/>
            <person name="Onodera C.S."/>
            <person name="Deng J.M."/>
            <person name="Akiyama K."/>
            <person name="Ansari Y."/>
            <person name="Arakawa T."/>
            <person name="Banh J."/>
            <person name="Banno F."/>
            <person name="Bowser L."/>
            <person name="Brooks S.Y."/>
            <person name="Carninci P."/>
            <person name="Chao Q."/>
            <person name="Choy N."/>
            <person name="Enju A."/>
            <person name="Goldsmith A.D."/>
            <person name="Gurjal M."/>
            <person name="Hansen N.F."/>
            <person name="Hayashizaki Y."/>
            <person name="Johnson-Hopson C."/>
            <person name="Hsuan V.W."/>
            <person name="Iida K."/>
            <person name="Karnes M."/>
            <person name="Khan S."/>
            <person name="Koesema E."/>
            <person name="Ishida J."/>
            <person name="Jiang P.X."/>
            <person name="Jones T."/>
            <person name="Kawai J."/>
            <person name="Kamiya A."/>
            <person name="Meyers C."/>
            <person name="Nakajima M."/>
            <person name="Narusaka M."/>
            <person name="Seki M."/>
            <person name="Sakurai T."/>
            <person name="Satou M."/>
            <person name="Tamse R."/>
            <person name="Vaysberg M."/>
            <person name="Wallender E.K."/>
            <person name="Wong C."/>
            <person name="Yamamura Y."/>
            <person name="Yuan S."/>
            <person name="Shinozaki K."/>
            <person name="Davis R.W."/>
            <person name="Theologis A."/>
            <person name="Ecker J.R."/>
        </authorList>
    </citation>
    <scope>NUCLEOTIDE SEQUENCE [LARGE SCALE MRNA]</scope>
    <source>
        <strain>cv. Columbia</strain>
    </source>
</reference>
<reference key="5">
    <citation type="journal article" date="2003" name="Mol. Cell. Proteomics">
        <title>Proteomics of the chloroplast envelope membranes from Arabidopsis thaliana.</title>
        <authorList>
            <person name="Ferro M."/>
            <person name="Salvi D."/>
            <person name="Brugiere S."/>
            <person name="Miras S."/>
            <person name="Kowalski S."/>
            <person name="Louwagie M."/>
            <person name="Garin J."/>
            <person name="Joyard J."/>
            <person name="Rolland N."/>
        </authorList>
    </citation>
    <scope>IDENTIFICATION BY MASS SPECTROMETRY</scope>
    <scope>SUBCELLULAR LOCATION [LARGE SCALE ANALYSIS]</scope>
    <source>
        <strain>cv. Wassilewskija</strain>
    </source>
</reference>
<reference key="6">
    <citation type="journal article" date="2007" name="Mol. Cell. Proteomics">
        <title>Multidimensional protein identification technology (MudPIT) analysis of ubiquitinated proteins in plants.</title>
        <authorList>
            <person name="Maor R."/>
            <person name="Jones A."/>
            <person name="Nuehse T.S."/>
            <person name="Studholme D.J."/>
            <person name="Peck S.C."/>
            <person name="Shirasu K."/>
        </authorList>
    </citation>
    <scope>IDENTIFICATION BY MASS SPECTROMETRY [LARGE SCALE ANALYSIS]</scope>
    <source>
        <strain>cv. Landsberg erecta</strain>
    </source>
</reference>
<reference key="7">
    <citation type="journal article" date="2010" name="Plant Physiol.">
        <title>Mitochondrial malate dehydrogenase lowers leaf respiration and alters photorespiration and plant growth in Arabidopsis.</title>
        <authorList>
            <person name="Tomaz T."/>
            <person name="Bagard M."/>
            <person name="Pracharoenwattana I."/>
            <person name="Linden P."/>
            <person name="Lee C.P."/>
            <person name="Carroll A.J."/>
            <person name="Stroeher E."/>
            <person name="Smith S.M."/>
            <person name="Gardestroem P."/>
            <person name="Millar A.H."/>
        </authorList>
    </citation>
    <scope>FUNCTION</scope>
    <scope>TISSUE SPECIFICITY</scope>
</reference>
<reference key="8">
    <citation type="journal article" date="2014" name="Mol. Plant">
        <title>The plastid-localized NAD-dependent malate dehydrogenase is crucial for energy homeostasis in developing Arabidopsis thaliana seeds.</title>
        <authorList>
            <person name="Selinski J."/>
            <person name="Koenig N."/>
            <person name="Wellmeyer B."/>
            <person name="Hanke G.T."/>
            <person name="Linke V."/>
            <person name="Neuhaus H.E."/>
            <person name="Scheibe R."/>
        </authorList>
    </citation>
    <scope>FUNCTION</scope>
    <scope>SUBCELLULAR LOCATION</scope>
    <scope>TISSUE SPECIFICITY</scope>
    <scope>DEVELOPMENTAL STAGE</scope>
    <scope>DISRUPTION PHENOTYPE</scope>
</reference>
<reference key="9">
    <citation type="journal article" date="2014" name="Plant Physiol.">
        <title>Plastidial NAD-dependent malate dehydrogenase is critical for embryo development and heterotrophic metabolism in Arabidopsis.</title>
        <authorList>
            <person name="Beeler S."/>
            <person name="Liu H.C."/>
            <person name="Stadler M."/>
            <person name="Schreier T."/>
            <person name="Eicke S."/>
            <person name="Lue W.L."/>
            <person name="Truernit E."/>
            <person name="Zeeman S.C."/>
            <person name="Chen J."/>
            <person name="Koetting O."/>
        </authorList>
    </citation>
    <scope>FUNCTION</scope>
    <scope>SUBCELLULAR LOCATION</scope>
    <scope>DEVELOPMENTAL STAGE</scope>
    <scope>DISRUPTION PHENOTYPE</scope>
</reference>
<sequence length="403" mass="42406">MATATSASLFSTVSSSYSKASSIPHSRLQSVKFNSVPSFTGLKSTSLISGSDSSSLAKTLRGSVTKAQTSDKKPYGFKINASYKVAVLGAAGGIGQPLSLLIKMSPLVSTLHLYDIANVKGVAADLSHCNTPSQVRDFTGPSELADCLKDVNVVVIPAGVPRKPGMTRDDLFNINANIVKTLVEAVAENCPNAFIHIISNPVNSTVPIAAEVLKKKGVYDPKKLFGVTTLDVVRANTFVSQKKNLKLIDVDVPVIGGHAGITILPLLSKTKPSVNFTDEEIQELTVRIQNAGTEVVDAKAGAGSATLSMAYAAARFVESSLRALDGDGDVYECSFVESTLTDLPFFASRVKIGKNGLEAVIESDLQGLTEYEQKALEALKVELKASIDKGVAFANKPAAAAAN</sequence>
<accession>Q9SN86</accession>
<accession>O81844</accession>
<feature type="transit peptide" description="Chloroplast" evidence="4">
    <location>
        <begin position="1"/>
        <end position="80"/>
    </location>
</feature>
<feature type="chain" id="PRO_0000224149" description="Malate dehydrogenase, chloroplastic">
    <location>
        <begin position="81"/>
        <end position="403"/>
    </location>
</feature>
<feature type="active site" description="Proton acceptor" evidence="2">
    <location>
        <position position="258"/>
    </location>
</feature>
<feature type="binding site" evidence="3">
    <location>
        <begin position="89"/>
        <end position="95"/>
    </location>
    <ligand>
        <name>NAD(+)</name>
        <dbReference type="ChEBI" id="CHEBI:57540"/>
    </ligand>
</feature>
<feature type="binding site" evidence="3">
    <location>
        <position position="115"/>
    </location>
    <ligand>
        <name>NAD(+)</name>
        <dbReference type="ChEBI" id="CHEBI:57540"/>
    </ligand>
</feature>
<feature type="binding site" evidence="2">
    <location>
        <position position="162"/>
    </location>
    <ligand>
        <name>substrate</name>
    </ligand>
</feature>
<feature type="binding site" evidence="2">
    <location>
        <position position="168"/>
    </location>
    <ligand>
        <name>substrate</name>
    </ligand>
</feature>
<feature type="binding site" evidence="3">
    <location>
        <position position="175"/>
    </location>
    <ligand>
        <name>NAD(+)</name>
        <dbReference type="ChEBI" id="CHEBI:57540"/>
    </ligand>
</feature>
<feature type="binding site" evidence="3">
    <location>
        <begin position="198"/>
        <end position="200"/>
    </location>
    <ligand>
        <name>NAD(+)</name>
        <dbReference type="ChEBI" id="CHEBI:57540"/>
    </ligand>
</feature>
<feature type="binding site" evidence="2">
    <location>
        <position position="200"/>
    </location>
    <ligand>
        <name>substrate</name>
    </ligand>
</feature>
<feature type="binding site" evidence="2">
    <location>
        <position position="234"/>
    </location>
    <ligand>
        <name>substrate</name>
    </ligand>
</feature>
<feature type="binding site" evidence="3">
    <location>
        <position position="309"/>
    </location>
    <ligand>
        <name>NAD(+)</name>
        <dbReference type="ChEBI" id="CHEBI:57540"/>
    </ligand>
</feature>
<feature type="sequence conflict" description="In Ref. 1; CAA74320." evidence="12" ref="1">
    <original>A</original>
    <variation>T</variation>
    <location>
        <position position="57"/>
    </location>
</feature>
<feature type="sequence conflict" description="In Ref. 1; CAA74320." evidence="12" ref="1">
    <original>K</original>
    <variation>N</variation>
    <location>
        <position position="66"/>
    </location>
</feature>
<feature type="strand" evidence="14">
    <location>
        <begin position="83"/>
        <end position="89"/>
    </location>
</feature>
<feature type="helix" evidence="14">
    <location>
        <begin position="95"/>
        <end position="103"/>
    </location>
</feature>
<feature type="strand" evidence="14">
    <location>
        <begin position="105"/>
        <end position="118"/>
    </location>
</feature>
<feature type="helix" evidence="14">
    <location>
        <begin position="120"/>
        <end position="127"/>
    </location>
</feature>
<feature type="strand" evidence="15">
    <location>
        <begin position="128"/>
        <end position="130"/>
    </location>
</feature>
<feature type="strand" evidence="14">
    <location>
        <begin position="132"/>
        <end position="140"/>
    </location>
</feature>
<feature type="helix" evidence="14">
    <location>
        <begin position="141"/>
        <end position="143"/>
    </location>
</feature>
<feature type="helix" evidence="14">
    <location>
        <begin position="144"/>
        <end position="147"/>
    </location>
</feature>
<feature type="strand" evidence="14">
    <location>
        <begin position="152"/>
        <end position="156"/>
    </location>
</feature>
<feature type="helix" evidence="14">
    <location>
        <begin position="168"/>
        <end position="189"/>
    </location>
</feature>
<feature type="strand" evidence="14">
    <location>
        <begin position="192"/>
        <end position="197"/>
    </location>
</feature>
<feature type="strand" evidence="15">
    <location>
        <begin position="199"/>
        <end position="201"/>
    </location>
</feature>
<feature type="turn" evidence="14">
    <location>
        <begin position="202"/>
        <end position="205"/>
    </location>
</feature>
<feature type="helix" evidence="14">
    <location>
        <begin position="206"/>
        <end position="215"/>
    </location>
</feature>
<feature type="helix" evidence="14">
    <location>
        <begin position="221"/>
        <end position="223"/>
    </location>
</feature>
<feature type="strand" evidence="14">
    <location>
        <begin position="224"/>
        <end position="226"/>
    </location>
</feature>
<feature type="helix" evidence="14">
    <location>
        <begin position="229"/>
        <end position="243"/>
    </location>
</feature>
<feature type="turn" evidence="14">
    <location>
        <begin position="247"/>
        <end position="249"/>
    </location>
</feature>
<feature type="strand" evidence="14">
    <location>
        <begin position="254"/>
        <end position="256"/>
    </location>
</feature>
<feature type="helix" evidence="14">
    <location>
        <begin position="260"/>
        <end position="262"/>
    </location>
</feature>
<feature type="strand" evidence="14">
    <location>
        <begin position="263"/>
        <end position="265"/>
    </location>
</feature>
<feature type="helix" evidence="14">
    <location>
        <begin position="267"/>
        <end position="269"/>
    </location>
</feature>
<feature type="helix" evidence="14">
    <location>
        <begin position="278"/>
        <end position="298"/>
    </location>
</feature>
<feature type="helix" evidence="14">
    <location>
        <begin position="307"/>
        <end position="324"/>
    </location>
</feature>
<feature type="strand" evidence="14">
    <location>
        <begin position="331"/>
        <end position="336"/>
    </location>
</feature>
<feature type="strand" evidence="14">
    <location>
        <begin position="340"/>
        <end position="353"/>
    </location>
</feature>
<feature type="strand" evidence="14">
    <location>
        <begin position="356"/>
        <end position="360"/>
    </location>
</feature>
<feature type="helix" evidence="14">
    <location>
        <begin position="362"/>
        <end position="365"/>
    </location>
</feature>
<feature type="helix" evidence="14">
    <location>
        <begin position="370"/>
        <end position="394"/>
    </location>
</feature>
<name>MDHP_ARATH</name>
<protein>
    <recommendedName>
        <fullName evidence="12">Malate dehydrogenase, chloroplastic</fullName>
        <ecNumber>1.1.1.37</ecNumber>
    </recommendedName>
    <alternativeName>
        <fullName evidence="11">Chloroplastic malate dehydrogenase</fullName>
        <shortName evidence="12">Chloroplastic MDH</shortName>
        <shortName evidence="11">cpNAD-MDH</shortName>
    </alternativeName>
    <alternativeName>
        <fullName evidence="12">Plastidic NAD-dependent malate dehydrogenase</fullName>
        <shortName evidence="12">pNAD-MDH</shortName>
    </alternativeName>
</protein>
<organism>
    <name type="scientific">Arabidopsis thaliana</name>
    <name type="common">Mouse-ear cress</name>
    <dbReference type="NCBI Taxonomy" id="3702"/>
    <lineage>
        <taxon>Eukaryota</taxon>
        <taxon>Viridiplantae</taxon>
        <taxon>Streptophyta</taxon>
        <taxon>Embryophyta</taxon>
        <taxon>Tracheophyta</taxon>
        <taxon>Spermatophyta</taxon>
        <taxon>Magnoliopsida</taxon>
        <taxon>eudicotyledons</taxon>
        <taxon>Gunneridae</taxon>
        <taxon>Pentapetalae</taxon>
        <taxon>rosids</taxon>
        <taxon>malvids</taxon>
        <taxon>Brassicales</taxon>
        <taxon>Brassicaceae</taxon>
        <taxon>Camelineae</taxon>
        <taxon>Arabidopsis</taxon>
    </lineage>
</organism>
<dbReference type="EC" id="1.1.1.37"/>
<dbReference type="EMBL" id="Y13987">
    <property type="protein sequence ID" value="CAA74320.1"/>
    <property type="molecule type" value="mRNA"/>
</dbReference>
<dbReference type="EMBL" id="AL132955">
    <property type="protein sequence ID" value="CAB61978.1"/>
    <property type="molecule type" value="Genomic_DNA"/>
</dbReference>
<dbReference type="EMBL" id="CP002686">
    <property type="protein sequence ID" value="AEE78292.1"/>
    <property type="molecule type" value="Genomic_DNA"/>
</dbReference>
<dbReference type="EMBL" id="AY128281">
    <property type="protein sequence ID" value="AAM91090.1"/>
    <property type="molecule type" value="mRNA"/>
</dbReference>
<dbReference type="EMBL" id="BT000621">
    <property type="protein sequence ID" value="AAN18188.1"/>
    <property type="molecule type" value="mRNA"/>
</dbReference>
<dbReference type="PIR" id="T45712">
    <property type="entry name" value="T45712"/>
</dbReference>
<dbReference type="PIR" id="T51862">
    <property type="entry name" value="T51862"/>
</dbReference>
<dbReference type="PDB" id="8J5D">
    <property type="method" value="EM"/>
    <property type="resolution" value="3.00 A"/>
    <property type="chains" value="B/C=81-403"/>
</dbReference>
<dbReference type="PDB" id="8XKU">
    <property type="method" value="EM"/>
    <property type="resolution" value="3.20 A"/>
    <property type="chains" value="I/J=1-403"/>
</dbReference>
<dbReference type="PDB" id="8XKV">
    <property type="method" value="EM"/>
    <property type="resolution" value="3.30 A"/>
    <property type="chains" value="I/J=1-403"/>
</dbReference>
<dbReference type="PDBsum" id="8J5D"/>
<dbReference type="PDBsum" id="8XKU"/>
<dbReference type="PDBsum" id="8XKV"/>
<dbReference type="EMDB" id="EMD-35985"/>
<dbReference type="EMDB" id="EMD-38425"/>
<dbReference type="EMDB" id="EMD-38428"/>
<dbReference type="SMR" id="Q9SN86"/>
<dbReference type="BioGRID" id="9226">
    <property type="interactions" value="4"/>
</dbReference>
<dbReference type="FunCoup" id="Q9SN86">
    <property type="interactions" value="2986"/>
</dbReference>
<dbReference type="STRING" id="3702.Q9SN86"/>
<dbReference type="iPTMnet" id="Q9SN86"/>
<dbReference type="PaxDb" id="3702-AT3G47520.1"/>
<dbReference type="ProteomicsDB" id="239049"/>
<dbReference type="EnsemblPlants" id="AT3G47520.1">
    <property type="protein sequence ID" value="AT3G47520.1"/>
    <property type="gene ID" value="AT3G47520"/>
</dbReference>
<dbReference type="Gramene" id="AT3G47520.1">
    <property type="protein sequence ID" value="AT3G47520.1"/>
    <property type="gene ID" value="AT3G47520"/>
</dbReference>
<dbReference type="KEGG" id="ath:AT3G47520"/>
<dbReference type="Araport" id="AT3G47520"/>
<dbReference type="TAIR" id="AT3G47520">
    <property type="gene designation" value="MDH"/>
</dbReference>
<dbReference type="eggNOG" id="KOG1494">
    <property type="taxonomic scope" value="Eukaryota"/>
</dbReference>
<dbReference type="HOGENOM" id="CLU_047181_0_0_1"/>
<dbReference type="InParanoid" id="Q9SN86"/>
<dbReference type="OMA" id="CIVECAY"/>
<dbReference type="PhylomeDB" id="Q9SN86"/>
<dbReference type="BioCyc" id="ARA:AT3G47520-MONOMER"/>
<dbReference type="BioCyc" id="MetaCyc:AT3G47520-MONOMER"/>
<dbReference type="BRENDA" id="1.1.1.37">
    <property type="organism ID" value="399"/>
</dbReference>
<dbReference type="CD-CODE" id="4299E36E">
    <property type="entry name" value="Nucleolus"/>
</dbReference>
<dbReference type="PRO" id="PR:Q9SN86"/>
<dbReference type="Proteomes" id="UP000006548">
    <property type="component" value="Chromosome 3"/>
</dbReference>
<dbReference type="ExpressionAtlas" id="Q9SN86">
    <property type="expression patterns" value="baseline and differential"/>
</dbReference>
<dbReference type="GO" id="GO:0048046">
    <property type="term" value="C:apoplast"/>
    <property type="evidence" value="ECO:0007005"/>
    <property type="project" value="TAIR"/>
</dbReference>
<dbReference type="GO" id="GO:0009507">
    <property type="term" value="C:chloroplast"/>
    <property type="evidence" value="ECO:0000314"/>
    <property type="project" value="TAIR"/>
</dbReference>
<dbReference type="GO" id="GO:0009941">
    <property type="term" value="C:chloroplast envelope"/>
    <property type="evidence" value="ECO:0007005"/>
    <property type="project" value="TAIR"/>
</dbReference>
<dbReference type="GO" id="GO:0009706">
    <property type="term" value="C:chloroplast inner membrane"/>
    <property type="evidence" value="ECO:0000314"/>
    <property type="project" value="TAIR"/>
</dbReference>
<dbReference type="GO" id="GO:0009570">
    <property type="term" value="C:chloroplast stroma"/>
    <property type="evidence" value="ECO:0007005"/>
    <property type="project" value="TAIR"/>
</dbReference>
<dbReference type="GO" id="GO:0005829">
    <property type="term" value="C:cytosol"/>
    <property type="evidence" value="ECO:0007005"/>
    <property type="project" value="TAIR"/>
</dbReference>
<dbReference type="GO" id="GO:0005739">
    <property type="term" value="C:mitochondrion"/>
    <property type="evidence" value="ECO:0007005"/>
    <property type="project" value="TAIR"/>
</dbReference>
<dbReference type="GO" id="GO:0000325">
    <property type="term" value="C:plant-type vacuole"/>
    <property type="evidence" value="ECO:0007005"/>
    <property type="project" value="TAIR"/>
</dbReference>
<dbReference type="GO" id="GO:0009536">
    <property type="term" value="C:plastid"/>
    <property type="evidence" value="ECO:0007005"/>
    <property type="project" value="TAIR"/>
</dbReference>
<dbReference type="GO" id="GO:0009532">
    <property type="term" value="C:plastid stroma"/>
    <property type="evidence" value="ECO:0000314"/>
    <property type="project" value="TAIR"/>
</dbReference>
<dbReference type="GO" id="GO:0010319">
    <property type="term" value="C:stromule"/>
    <property type="evidence" value="ECO:0000314"/>
    <property type="project" value="TAIR"/>
</dbReference>
<dbReference type="GO" id="GO:0062091">
    <property type="term" value="C:Ycf2/FtsHi complex"/>
    <property type="evidence" value="ECO:0000314"/>
    <property type="project" value="TAIR"/>
</dbReference>
<dbReference type="GO" id="GO:0016464">
    <property type="term" value="F:chloroplast protein-transporting ATPase activity"/>
    <property type="evidence" value="ECO:0000314"/>
    <property type="project" value="TAIR"/>
</dbReference>
<dbReference type="GO" id="GO:0030060">
    <property type="term" value="F:L-malate dehydrogenase (NAD+) activity"/>
    <property type="evidence" value="ECO:0000314"/>
    <property type="project" value="TAIR"/>
</dbReference>
<dbReference type="GO" id="GO:0009658">
    <property type="term" value="P:chloroplast organization"/>
    <property type="evidence" value="ECO:0000315"/>
    <property type="project" value="TAIR"/>
</dbReference>
<dbReference type="GO" id="GO:0042742">
    <property type="term" value="P:defense response to bacterium"/>
    <property type="evidence" value="ECO:0000315"/>
    <property type="project" value="TAIR"/>
</dbReference>
<dbReference type="GO" id="GO:0009793">
    <property type="term" value="P:embryo development ending in seed dormancy"/>
    <property type="evidence" value="ECO:0000315"/>
    <property type="project" value="TAIR"/>
</dbReference>
<dbReference type="GO" id="GO:0006108">
    <property type="term" value="P:malate metabolic process"/>
    <property type="evidence" value="ECO:0007669"/>
    <property type="project" value="InterPro"/>
</dbReference>
<dbReference type="GO" id="GO:0045037">
    <property type="term" value="P:protein import into chloroplast stroma"/>
    <property type="evidence" value="ECO:0000315"/>
    <property type="project" value="TAIR"/>
</dbReference>
<dbReference type="GO" id="GO:0009409">
    <property type="term" value="P:response to cold"/>
    <property type="evidence" value="ECO:0000270"/>
    <property type="project" value="TAIR"/>
</dbReference>
<dbReference type="GO" id="GO:0006099">
    <property type="term" value="P:tricarboxylic acid cycle"/>
    <property type="evidence" value="ECO:0007669"/>
    <property type="project" value="UniProtKB-KW"/>
</dbReference>
<dbReference type="CDD" id="cd01337">
    <property type="entry name" value="MDH_glyoxysomal_mitochondrial"/>
    <property type="match status" value="1"/>
</dbReference>
<dbReference type="FunFam" id="3.40.50.720:FF:000017">
    <property type="entry name" value="Malate dehydrogenase"/>
    <property type="match status" value="1"/>
</dbReference>
<dbReference type="FunFam" id="3.90.110.10:FF:000001">
    <property type="entry name" value="Malate dehydrogenase"/>
    <property type="match status" value="1"/>
</dbReference>
<dbReference type="Gene3D" id="3.90.110.10">
    <property type="entry name" value="Lactate dehydrogenase/glycoside hydrolase, family 4, C-terminal"/>
    <property type="match status" value="1"/>
</dbReference>
<dbReference type="Gene3D" id="3.40.50.720">
    <property type="entry name" value="NAD(P)-binding Rossmann-like Domain"/>
    <property type="match status" value="1"/>
</dbReference>
<dbReference type="InterPro" id="IPR022383">
    <property type="entry name" value="Lactate/malate_DH_C"/>
</dbReference>
<dbReference type="InterPro" id="IPR001236">
    <property type="entry name" value="Lactate/malate_DH_N"/>
</dbReference>
<dbReference type="InterPro" id="IPR015955">
    <property type="entry name" value="Lactate_DH/Glyco_Ohase_4_C"/>
</dbReference>
<dbReference type="InterPro" id="IPR001252">
    <property type="entry name" value="Malate_DH_AS"/>
</dbReference>
<dbReference type="InterPro" id="IPR010097">
    <property type="entry name" value="Malate_DH_type1"/>
</dbReference>
<dbReference type="InterPro" id="IPR036291">
    <property type="entry name" value="NAD(P)-bd_dom_sf"/>
</dbReference>
<dbReference type="NCBIfam" id="TIGR01772">
    <property type="entry name" value="MDH_euk_gproteo"/>
    <property type="match status" value="1"/>
</dbReference>
<dbReference type="PANTHER" id="PTHR11540">
    <property type="entry name" value="MALATE AND LACTATE DEHYDROGENASE"/>
    <property type="match status" value="1"/>
</dbReference>
<dbReference type="PANTHER" id="PTHR11540:SF16">
    <property type="entry name" value="MALATE DEHYDROGENASE, MITOCHONDRIAL"/>
    <property type="match status" value="1"/>
</dbReference>
<dbReference type="Pfam" id="PF02866">
    <property type="entry name" value="Ldh_1_C"/>
    <property type="match status" value="1"/>
</dbReference>
<dbReference type="Pfam" id="PF00056">
    <property type="entry name" value="Ldh_1_N"/>
    <property type="match status" value="1"/>
</dbReference>
<dbReference type="SUPFAM" id="SSF56327">
    <property type="entry name" value="LDH C-terminal domain-like"/>
    <property type="match status" value="1"/>
</dbReference>
<dbReference type="SUPFAM" id="SSF51735">
    <property type="entry name" value="NAD(P)-binding Rossmann-fold domains"/>
    <property type="match status" value="1"/>
</dbReference>
<dbReference type="PROSITE" id="PS00068">
    <property type="entry name" value="MDH"/>
    <property type="match status" value="1"/>
</dbReference>
<comment type="function">
    <text evidence="8 9 13">Catalyzes a reversible NAD-dependent dehydrogenase reaction involved in central metabolism and redox homeostasis between organelle compartments (Probable). Plays a key role in the metabolism of dark chloroplasts and non-green plastids. Essential for embryo viability (PubMed:24198233, PubMed:24453164). Plays an essential role in heterotrophic metabolism in embryos, and autotrophic metabolism in photosynthetic tissues as well (PubMed:24453164).</text>
</comment>
<comment type="catalytic activity">
    <reaction evidence="5">
        <text>(S)-malate + NAD(+) = oxaloacetate + NADH + H(+)</text>
        <dbReference type="Rhea" id="RHEA:21432"/>
        <dbReference type="ChEBI" id="CHEBI:15378"/>
        <dbReference type="ChEBI" id="CHEBI:15589"/>
        <dbReference type="ChEBI" id="CHEBI:16452"/>
        <dbReference type="ChEBI" id="CHEBI:57540"/>
        <dbReference type="ChEBI" id="CHEBI:57945"/>
        <dbReference type="EC" id="1.1.1.37"/>
    </reaction>
</comment>
<comment type="subunit">
    <text evidence="1">Homodimer.</text>
</comment>
<comment type="subcellular location">
    <subcellularLocation>
        <location evidence="6 8 9 10">Plastid</location>
        <location evidence="6 8 9 10">Chloroplast stroma</location>
    </subcellularLocation>
</comment>
<comment type="tissue specificity">
    <text evidence="7 8">Expressed in rosette leaves (PubMed:20876337). Expressed in meristematic regions of roots and shoots, cotyledons, young leaves, trichomes, stamen, pollen, tapetum, gynoecium and ovules (PubMed:24198233).</text>
</comment>
<comment type="developmental stage">
    <text evidence="8 9">During pollen development, expressed in mature pollen grains and early in pollen-tube growth. Not expressed in immature pollen grains and fully grown pollen tubes (PubMed:24198233). During embryo development, expressed from the heart stage to mature embryo. Not expressed at the beginning of embryo development up to the globular stage (PubMed:24198233, PubMed:24453164).</text>
</comment>
<comment type="disruption phenotype">
    <text evidence="8 9">Embryonic lethality when homozygous due to embryo development arrest at globular stage.</text>
</comment>
<comment type="similarity">
    <text evidence="12">Belongs to the LDH/MDH superfamily. MDH type 1 family.</text>
</comment>
<gene>
    <name type="ordered locus">At3g47520</name>
    <name type="ORF">F1P2.70</name>
</gene>
<evidence type="ECO:0000250" key="1"/>
<evidence type="ECO:0000250" key="2">
    <source>
        <dbReference type="UniProtKB" id="P11708"/>
    </source>
</evidence>
<evidence type="ECO:0000250" key="3">
    <source>
        <dbReference type="UniProtKB" id="P40926"/>
    </source>
</evidence>
<evidence type="ECO:0000255" key="4"/>
<evidence type="ECO:0000255" key="5">
    <source>
        <dbReference type="PROSITE-ProRule" id="PRU10004"/>
    </source>
</evidence>
<evidence type="ECO:0000269" key="6">
    <source>
    </source>
</evidence>
<evidence type="ECO:0000269" key="7">
    <source>
    </source>
</evidence>
<evidence type="ECO:0000269" key="8">
    <source>
    </source>
</evidence>
<evidence type="ECO:0000269" key="9">
    <source>
    </source>
</evidence>
<evidence type="ECO:0000269" key="10">
    <source>
    </source>
</evidence>
<evidence type="ECO:0000303" key="11">
    <source>
    </source>
</evidence>
<evidence type="ECO:0000305" key="12"/>
<evidence type="ECO:0000305" key="13">
    <source>
    </source>
</evidence>
<evidence type="ECO:0007829" key="14">
    <source>
        <dbReference type="PDB" id="8XKU"/>
    </source>
</evidence>
<evidence type="ECO:0007829" key="15">
    <source>
        <dbReference type="PDB" id="8XKV"/>
    </source>
</evidence>
<keyword id="KW-0002">3D-structure</keyword>
<keyword id="KW-0150">Chloroplast</keyword>
<keyword id="KW-0520">NAD</keyword>
<keyword id="KW-0560">Oxidoreductase</keyword>
<keyword id="KW-0934">Plastid</keyword>
<keyword id="KW-1185">Reference proteome</keyword>
<keyword id="KW-0809">Transit peptide</keyword>
<keyword id="KW-0816">Tricarboxylic acid cycle</keyword>